<name>RSMI_LEPBL</name>
<evidence type="ECO:0000255" key="1">
    <source>
        <dbReference type="HAMAP-Rule" id="MF_01877"/>
    </source>
</evidence>
<evidence type="ECO:0000256" key="2">
    <source>
        <dbReference type="SAM" id="MobiDB-lite"/>
    </source>
</evidence>
<proteinExistence type="inferred from homology"/>
<comment type="function">
    <text evidence="1">Catalyzes the 2'-O-methylation of the ribose of cytidine 1402 (C1402) in 16S rRNA.</text>
</comment>
<comment type="catalytic activity">
    <reaction evidence="1">
        <text>cytidine(1402) in 16S rRNA + S-adenosyl-L-methionine = 2'-O-methylcytidine(1402) in 16S rRNA + S-adenosyl-L-homocysteine + H(+)</text>
        <dbReference type="Rhea" id="RHEA:42924"/>
        <dbReference type="Rhea" id="RHEA-COMP:10285"/>
        <dbReference type="Rhea" id="RHEA-COMP:10286"/>
        <dbReference type="ChEBI" id="CHEBI:15378"/>
        <dbReference type="ChEBI" id="CHEBI:57856"/>
        <dbReference type="ChEBI" id="CHEBI:59789"/>
        <dbReference type="ChEBI" id="CHEBI:74495"/>
        <dbReference type="ChEBI" id="CHEBI:82748"/>
        <dbReference type="EC" id="2.1.1.198"/>
    </reaction>
</comment>
<comment type="subcellular location">
    <subcellularLocation>
        <location evidence="1">Cytoplasm</location>
    </subcellularLocation>
</comment>
<comment type="similarity">
    <text evidence="1">Belongs to the methyltransferase superfamily. RsmI family.</text>
</comment>
<gene>
    <name evidence="1" type="primary">rsmI</name>
    <name type="ordered locus">LBL_1004</name>
</gene>
<dbReference type="EC" id="2.1.1.198" evidence="1"/>
<dbReference type="EMBL" id="CP000348">
    <property type="protein sequence ID" value="ABJ78535.1"/>
    <property type="molecule type" value="Genomic_DNA"/>
</dbReference>
<dbReference type="RefSeq" id="WP_011669811.1">
    <property type="nucleotide sequence ID" value="NC_008508.1"/>
</dbReference>
<dbReference type="SMR" id="Q053G0"/>
<dbReference type="KEGG" id="lbl:LBL_1004"/>
<dbReference type="HOGENOM" id="CLU_044779_4_1_12"/>
<dbReference type="GO" id="GO:0005737">
    <property type="term" value="C:cytoplasm"/>
    <property type="evidence" value="ECO:0007669"/>
    <property type="project" value="UniProtKB-SubCell"/>
</dbReference>
<dbReference type="GO" id="GO:0070677">
    <property type="term" value="F:rRNA (cytosine-2'-O-)-methyltransferase activity"/>
    <property type="evidence" value="ECO:0007669"/>
    <property type="project" value="UniProtKB-UniRule"/>
</dbReference>
<dbReference type="Gene3D" id="3.40.1010.10">
    <property type="entry name" value="Cobalt-precorrin-4 Transmethylase, Domain 1"/>
    <property type="match status" value="1"/>
</dbReference>
<dbReference type="Gene3D" id="3.30.950.10">
    <property type="entry name" value="Methyltransferase, Cobalt-precorrin-4 Transmethylase, Domain 2"/>
    <property type="match status" value="1"/>
</dbReference>
<dbReference type="HAMAP" id="MF_01877">
    <property type="entry name" value="16SrRNA_methyltr_I"/>
    <property type="match status" value="1"/>
</dbReference>
<dbReference type="InterPro" id="IPR000878">
    <property type="entry name" value="4pyrrol_Mease"/>
</dbReference>
<dbReference type="InterPro" id="IPR035996">
    <property type="entry name" value="4pyrrol_Methylase_sf"/>
</dbReference>
<dbReference type="InterPro" id="IPR014777">
    <property type="entry name" value="4pyrrole_Mease_sub1"/>
</dbReference>
<dbReference type="InterPro" id="IPR014776">
    <property type="entry name" value="4pyrrole_Mease_sub2"/>
</dbReference>
<dbReference type="InterPro" id="IPR008189">
    <property type="entry name" value="rRNA_ssu_MeTfrase_I"/>
</dbReference>
<dbReference type="PANTHER" id="PTHR46111">
    <property type="entry name" value="RIBOSOMAL RNA SMALL SUBUNIT METHYLTRANSFERASE I"/>
    <property type="match status" value="1"/>
</dbReference>
<dbReference type="PANTHER" id="PTHR46111:SF1">
    <property type="entry name" value="RIBOSOMAL RNA SMALL SUBUNIT METHYLTRANSFERASE I"/>
    <property type="match status" value="1"/>
</dbReference>
<dbReference type="Pfam" id="PF00590">
    <property type="entry name" value="TP_methylase"/>
    <property type="match status" value="1"/>
</dbReference>
<dbReference type="PIRSF" id="PIRSF005917">
    <property type="entry name" value="MTase_YraL"/>
    <property type="match status" value="1"/>
</dbReference>
<dbReference type="SUPFAM" id="SSF53790">
    <property type="entry name" value="Tetrapyrrole methylase"/>
    <property type="match status" value="1"/>
</dbReference>
<accession>Q053G0</accession>
<sequence length="253" mass="28123">MKKELQGALVLVSVSLGNFGDLTARARHLLEYCDILIGEEFRTTSTLLKSLSISKQFLLCNEHTTPEEIRSLGQIVVDSGLTVLVSDAGTPGIEDPGRELVGEVLRRGGRVQSAPGPIAFGAALSISGFKTSPFTFCGFLSRDSSERKLELSRYLKPGHTVVFYETPYRYKAVLRDLDSVLIETGEDRAIFFCLDLTLDSEFQFRGKLGELLKVLDTLPKGNPVIVVSQRKEQRSQRSFSKGDKKPSFKRFKK</sequence>
<organism>
    <name type="scientific">Leptospira borgpetersenii serovar Hardjo-bovis (strain L550)</name>
    <dbReference type="NCBI Taxonomy" id="355276"/>
    <lineage>
        <taxon>Bacteria</taxon>
        <taxon>Pseudomonadati</taxon>
        <taxon>Spirochaetota</taxon>
        <taxon>Spirochaetia</taxon>
        <taxon>Leptospirales</taxon>
        <taxon>Leptospiraceae</taxon>
        <taxon>Leptospira</taxon>
    </lineage>
</organism>
<keyword id="KW-0963">Cytoplasm</keyword>
<keyword id="KW-0489">Methyltransferase</keyword>
<keyword id="KW-0698">rRNA processing</keyword>
<keyword id="KW-0949">S-adenosyl-L-methionine</keyword>
<keyword id="KW-0808">Transferase</keyword>
<feature type="chain" id="PRO_0000394489" description="Ribosomal RNA small subunit methyltransferase I">
    <location>
        <begin position="1"/>
        <end position="253"/>
    </location>
</feature>
<feature type="region of interest" description="Disordered" evidence="2">
    <location>
        <begin position="230"/>
        <end position="253"/>
    </location>
</feature>
<feature type="compositionally biased region" description="Basic and acidic residues" evidence="2">
    <location>
        <begin position="230"/>
        <end position="246"/>
    </location>
</feature>
<reference key="1">
    <citation type="journal article" date="2006" name="Proc. Natl. Acad. Sci. U.S.A.">
        <title>Genome reduction in Leptospira borgpetersenii reflects limited transmission potential.</title>
        <authorList>
            <person name="Bulach D.M."/>
            <person name="Zuerner R.L."/>
            <person name="Wilson P."/>
            <person name="Seemann T."/>
            <person name="McGrath A."/>
            <person name="Cullen P.A."/>
            <person name="Davis J."/>
            <person name="Johnson M."/>
            <person name="Kuczek E."/>
            <person name="Alt D.P."/>
            <person name="Peterson-Burch B."/>
            <person name="Coppel R.L."/>
            <person name="Rood J.I."/>
            <person name="Davies J.K."/>
            <person name="Adler B."/>
        </authorList>
    </citation>
    <scope>NUCLEOTIDE SEQUENCE [LARGE SCALE GENOMIC DNA]</scope>
    <source>
        <strain>L550</strain>
    </source>
</reference>
<protein>
    <recommendedName>
        <fullName evidence="1">Ribosomal RNA small subunit methyltransferase I</fullName>
        <ecNumber evidence="1">2.1.1.198</ecNumber>
    </recommendedName>
    <alternativeName>
        <fullName evidence="1">16S rRNA 2'-O-ribose C1402 methyltransferase</fullName>
    </alternativeName>
    <alternativeName>
        <fullName evidence="1">rRNA (cytidine-2'-O-)-methyltransferase RsmI</fullName>
    </alternativeName>
</protein>